<dbReference type="EMBL" id="M25370">
    <property type="protein sequence ID" value="AAA43559.1"/>
    <property type="molecule type" value="Genomic_RNA"/>
</dbReference>
<dbReference type="PIR" id="G32663">
    <property type="entry name" value="MNIVA8"/>
</dbReference>
<dbReference type="SMR" id="P13143"/>
<dbReference type="GO" id="GO:0030430">
    <property type="term" value="C:host cell cytoplasm"/>
    <property type="evidence" value="ECO:0007669"/>
    <property type="project" value="UniProtKB-SubCell"/>
</dbReference>
<dbReference type="GO" id="GO:0042025">
    <property type="term" value="C:host cell nucleus"/>
    <property type="evidence" value="ECO:0007669"/>
    <property type="project" value="UniProtKB-SubCell"/>
</dbReference>
<dbReference type="GO" id="GO:0030291">
    <property type="term" value="F:protein serine/threonine kinase inhibitor activity"/>
    <property type="evidence" value="ECO:0007669"/>
    <property type="project" value="UniProtKB-KW"/>
</dbReference>
<dbReference type="GO" id="GO:0003723">
    <property type="term" value="F:RNA binding"/>
    <property type="evidence" value="ECO:0007669"/>
    <property type="project" value="UniProtKB-KW"/>
</dbReference>
<dbReference type="GO" id="GO:0039540">
    <property type="term" value="P:symbiont-mediated suppression of host cytoplasmic pattern recognition receptor signaling pathway via inhibition of RIG-I activity"/>
    <property type="evidence" value="ECO:0007669"/>
    <property type="project" value="UniProtKB-KW"/>
</dbReference>
<dbReference type="GO" id="GO:0039657">
    <property type="term" value="P:symbiont-mediated suppression of host gene expression"/>
    <property type="evidence" value="ECO:0007669"/>
    <property type="project" value="UniProtKB-KW"/>
</dbReference>
<dbReference type="GO" id="GO:0039524">
    <property type="term" value="P:symbiont-mediated suppression of host mRNA processing"/>
    <property type="evidence" value="ECO:0007669"/>
    <property type="project" value="UniProtKB-KW"/>
</dbReference>
<dbReference type="GO" id="GO:0039580">
    <property type="term" value="P:symbiont-mediated suppression of host PKR/eIFalpha signaling"/>
    <property type="evidence" value="ECO:0007669"/>
    <property type="project" value="UniProtKB-KW"/>
</dbReference>
<dbReference type="GO" id="GO:0039502">
    <property type="term" value="P:symbiont-mediated suppression of host type I interferon-mediated signaling pathway"/>
    <property type="evidence" value="ECO:0007669"/>
    <property type="project" value="UniProtKB-KW"/>
</dbReference>
<dbReference type="Gene3D" id="3.30.420.330">
    <property type="entry name" value="Influenza virus non-structural protein, effector domain"/>
    <property type="match status" value="1"/>
</dbReference>
<dbReference type="Gene3D" id="1.10.287.10">
    <property type="entry name" value="S15/NS1, RNA-binding"/>
    <property type="match status" value="1"/>
</dbReference>
<dbReference type="HAMAP" id="MF_04066">
    <property type="entry name" value="INFV_NS1"/>
    <property type="match status" value="1"/>
</dbReference>
<dbReference type="InterPro" id="IPR004208">
    <property type="entry name" value="NS1"/>
</dbReference>
<dbReference type="InterPro" id="IPR000256">
    <property type="entry name" value="NS1A"/>
</dbReference>
<dbReference type="InterPro" id="IPR038064">
    <property type="entry name" value="NS1A_effect_dom-like_sf"/>
</dbReference>
<dbReference type="InterPro" id="IPR009068">
    <property type="entry name" value="uS15_NS1_RNA-bd_sf"/>
</dbReference>
<dbReference type="Pfam" id="PF00600">
    <property type="entry name" value="Flu_NS1"/>
    <property type="match status" value="1"/>
</dbReference>
<dbReference type="SUPFAM" id="SSF143021">
    <property type="entry name" value="Ns1 effector domain-like"/>
    <property type="match status" value="1"/>
</dbReference>
<dbReference type="SUPFAM" id="SSF47060">
    <property type="entry name" value="S15/NS1 RNA-binding domain"/>
    <property type="match status" value="1"/>
</dbReference>
<organism>
    <name type="scientific">Influenza A virus (strain A/Pintail/Alberta/358/1979 H3N6)</name>
    <dbReference type="NCBI Taxonomy" id="11452"/>
    <lineage>
        <taxon>Viruses</taxon>
        <taxon>Riboviria</taxon>
        <taxon>Orthornavirae</taxon>
        <taxon>Negarnaviricota</taxon>
        <taxon>Polyploviricotina</taxon>
        <taxon>Insthoviricetes</taxon>
        <taxon>Articulavirales</taxon>
        <taxon>Orthomyxoviridae</taxon>
        <taxon>Alphainfluenzavirus</taxon>
        <taxon>Alphainfluenzavirus influenzae</taxon>
        <taxon>Influenza A virus</taxon>
    </lineage>
</organism>
<reference key="1">
    <citation type="journal article" date="1989" name="Virology">
        <title>The B allele of the NS gene of avian influenza viruses, but not the A allele, attenuates a human influenza A virus for squirrel monkeys.</title>
        <authorList>
            <person name="Treanor J.J."/>
            <person name="Snyder M.H."/>
            <person name="London W.T."/>
            <person name="Murphy B.R."/>
        </authorList>
    </citation>
    <scope>NUCLEOTIDE SEQUENCE [GENOMIC RNA]</scope>
</reference>
<reference key="2">
    <citation type="journal article" date="2003" name="Virology">
        <title>Intracellular warfare between human influenza viruses and human cells: the roles of the viral NS1 protein.</title>
        <authorList>
            <person name="Krug R.M."/>
            <person name="Yuan W."/>
            <person name="Noah D.L."/>
            <person name="Latham A.G."/>
        </authorList>
    </citation>
    <scope>REVIEW</scope>
</reference>
<comment type="function">
    <text evidence="1">Inhibits post-transcriptional processing of cellular pre-mRNA, by binding and inhibiting two cellular proteins that are required for the 3'-end processing of cellular pre-mRNAs: the 30 kDa cleavage and polyadenylation specificity factor/CPSF4 and the poly(A)-binding protein 2/PABPN1. In turn, unprocessed 3' end pre-mRNAs accumulate in the host nucleus and are no longer exported to the cytoplasm. Cellular protein synthesis is thereby shut off very early after virus infection. Viral protein synthesis is not affected by the inhibition of the cellular 3' end processing machinery because the poly(A) tails of viral mRNAs are produced by the viral polymerase through a stuttering mechanism. Prevents the establishment of the cellular antiviral state by inhibiting TRIM25-mediated RIGI ubiquitination, which normally triggers the antiviral transduction signal that leads to the activation of type I IFN genes by transcription factors IRF3 and IRF7. Also binds poly(A) and U6 snRNA. Inhibits the integrated stress response (ISR) in the infected cell by blocking dsRNA binding by EIF2AK2/PKR and further phosphorylation of EIF2S1/EIF-2ALPHA. Stress granule formation is thus inhibited, which allows protein synthesis and viral replication.</text>
</comment>
<comment type="subunit">
    <text evidence="1">Homodimer. Interacts with host TRIM25 (via coiled coil); this interaction specifically inhibits TRIM25 multimerization and TRIM25-mediated RIGI CARD ubiquitination. Interacts with human EIF2AK2/PKR, CPSF4, IVNS1ABP and PABPN1.</text>
</comment>
<comment type="subcellular location">
    <subcellularLocation>
        <location evidence="1">Host nucleus</location>
    </subcellularLocation>
    <subcellularLocation>
        <location evidence="1">Host cytoplasm</location>
    </subcellularLocation>
    <text evidence="1">In uninfected, transfected cells, NS1 is localized in the nucleus. Only in virus infected cells, the nuclear export signal is unveiled, presumably by a viral protein, and a fraction of NS1 is exported in the cytoplasm.</text>
</comment>
<comment type="alternative products">
    <event type="alternative splicing"/>
    <isoform>
        <id>P13143-1</id>
        <name>NS1</name>
        <sequence type="displayed"/>
    </isoform>
    <isoform>
        <id>P69262-1</id>
        <name>NEP</name>
        <name>NS2</name>
        <sequence type="external"/>
    </isoform>
</comment>
<comment type="domain">
    <text evidence="1">The dsRNA-binding region is required for suppression of RNA silencing.</text>
</comment>
<comment type="PTM">
    <text evidence="1">Upon interferon induction, ISGylated via host HERC5; this results in the impairment of NS1 interaction with RNA targets due to its inability to form homodimers and to interact with host EIF2AK2/PKR.</text>
</comment>
<comment type="similarity">
    <text evidence="1">Belongs to the influenza A viruses NS1 family.</text>
</comment>
<protein>
    <recommendedName>
        <fullName evidence="1">Non-structural protein 1</fullName>
        <shortName evidence="1">NS1</shortName>
    </recommendedName>
    <alternativeName>
        <fullName evidence="1">NS1A</fullName>
    </alternativeName>
</protein>
<accession>P13143</accession>
<name>NS1_I79A3</name>
<evidence type="ECO:0000255" key="1">
    <source>
        <dbReference type="HAMAP-Rule" id="MF_04066"/>
    </source>
</evidence>
<evidence type="ECO:0000256" key="2">
    <source>
        <dbReference type="SAM" id="MobiDB-lite"/>
    </source>
</evidence>
<organismHost>
    <name type="scientific">Aves</name>
    <dbReference type="NCBI Taxonomy" id="8782"/>
</organismHost>
<gene>
    <name evidence="1" type="primary">NS</name>
</gene>
<proteinExistence type="inferred from homology"/>
<feature type="chain" id="PRO_0000078944" description="Non-structural protein 1">
    <location>
        <begin position="1"/>
        <end position="230"/>
    </location>
</feature>
<feature type="region of interest" description="RNA-binding and homodimerization" evidence="1">
    <location>
        <begin position="1"/>
        <end position="73"/>
    </location>
</feature>
<feature type="region of interest" description="CPSF4-binding" evidence="1">
    <location>
        <begin position="180"/>
        <end position="215"/>
    </location>
</feature>
<feature type="region of interest" description="Disordered" evidence="2">
    <location>
        <begin position="209"/>
        <end position="230"/>
    </location>
</feature>
<feature type="region of interest" description="PABPN1-binding" evidence="1">
    <location>
        <begin position="223"/>
        <end position="230"/>
    </location>
</feature>
<feature type="short sequence motif" description="Nuclear localization signal" evidence="1">
    <location>
        <begin position="34"/>
        <end position="38"/>
    </location>
</feature>
<feature type="short sequence motif" description="Nuclear export signal" evidence="1">
    <location>
        <begin position="137"/>
        <end position="146"/>
    </location>
</feature>
<keyword id="KW-0025">Alternative splicing</keyword>
<keyword id="KW-1262">Eukaryotic host gene expression shutoff by virus</keyword>
<keyword id="KW-1035">Host cytoplasm</keyword>
<keyword id="KW-1190">Host gene expression shutoff by virus</keyword>
<keyword id="KW-1192">Host mRNA suppression by virus</keyword>
<keyword id="KW-1048">Host nucleus</keyword>
<keyword id="KW-0945">Host-virus interaction</keyword>
<keyword id="KW-1090">Inhibition of host innate immune response by virus</keyword>
<keyword id="KW-1114">Inhibition of host interferon signaling pathway by virus</keyword>
<keyword id="KW-1102">Inhibition of host PKR by virus</keyword>
<keyword id="KW-1103">Inhibition of host pre-mRNA processing by virus</keyword>
<keyword id="KW-1088">Inhibition of host RIG-I by virus</keyword>
<keyword id="KW-1113">Inhibition of host RLR pathway by virus</keyword>
<keyword id="KW-0922">Interferon antiviral system evasion</keyword>
<keyword id="KW-0694">RNA-binding</keyword>
<keyword id="KW-0832">Ubl conjugation</keyword>
<keyword id="KW-0899">Viral immunoevasion</keyword>
<sequence>MDSNTITSFQVDCYLWHIRKLLSMRDMCDAPFDDRLRRDQKALKGRGSTLGLDLRVATMEGKKIVEDILKSETDENLKIAIASSPAPRYITDMSIEEISREWYMLMPRQKITGGLMVKMDQAIMDKRITLKANFSVLFDQLETLVSLRAFTDHGAIVAEISPIPSMPGHSTEDVKNAIGILIGGLEWNDNSIRASENIQRFAWGIRDENGGPPLPPKQKRYMARRVESEV</sequence>